<protein>
    <recommendedName>
        <fullName>Small heat shock protein OV25-2</fullName>
    </recommendedName>
</protein>
<proteinExistence type="evidence at transcript level"/>
<accession>P29779</accession>
<feature type="chain" id="PRO_0000126009" description="Small heat shock protein OV25-2">
    <location>
        <begin position="1" status="less than"/>
        <end position="166"/>
    </location>
</feature>
<feature type="domain" description="sHSP" evidence="1">
    <location>
        <begin position="38"/>
        <end position="149"/>
    </location>
</feature>
<feature type="region of interest" description="Disordered" evidence="2">
    <location>
        <begin position="140"/>
        <end position="166"/>
    </location>
</feature>
<feature type="non-terminal residue">
    <location>
        <position position="1"/>
    </location>
</feature>
<comment type="similarity">
    <text evidence="1">Belongs to the small heat shock protein (HSP20) family.</text>
</comment>
<keyword id="KW-1185">Reference proteome</keyword>
<keyword id="KW-0346">Stress response</keyword>
<gene>
    <name type="primary">OV25-2</name>
</gene>
<reference key="1">
    <citation type="submission" date="1992-10" db="EMBL/GenBank/DDBJ databases">
        <authorList>
            <person name="Hoefle W."/>
        </authorList>
    </citation>
    <scope>NUCLEOTIDE SEQUENCE [MRNA]</scope>
</reference>
<sequence>QTSPMERFIVNLLDSTFDDRSSRPLHSVAPYWLHQPELNECNIGNSLGEVINEKDKFAVRADVSHFHPKELSVSVRDRELVIEGHHEERTDPAGHGSIERHFIRKYVLPEEVQPDTIESHLSDKGVLTISANKTAIGTTASRNIPIRASPKEPEANQKSAINDAKQ</sequence>
<name>OV252_ONCVO</name>
<dbReference type="EMBL" id="X68669">
    <property type="protein sequence ID" value="CAA48633.1"/>
    <property type="molecule type" value="mRNA"/>
</dbReference>
<dbReference type="PIR" id="S29693">
    <property type="entry name" value="S29693"/>
</dbReference>
<dbReference type="SMR" id="P29779"/>
<dbReference type="STRING" id="6282.P29779"/>
<dbReference type="HOGENOM" id="CLU_095001_4_0_1"/>
<dbReference type="Proteomes" id="UP000024404">
    <property type="component" value="Unassembled WGS sequence"/>
</dbReference>
<dbReference type="GO" id="GO:0005737">
    <property type="term" value="C:cytoplasm"/>
    <property type="evidence" value="ECO:0007669"/>
    <property type="project" value="TreeGrafter"/>
</dbReference>
<dbReference type="GO" id="GO:0005634">
    <property type="term" value="C:nucleus"/>
    <property type="evidence" value="ECO:0007669"/>
    <property type="project" value="TreeGrafter"/>
</dbReference>
<dbReference type="GO" id="GO:0051082">
    <property type="term" value="F:unfolded protein binding"/>
    <property type="evidence" value="ECO:0007669"/>
    <property type="project" value="TreeGrafter"/>
</dbReference>
<dbReference type="GO" id="GO:0042026">
    <property type="term" value="P:protein refolding"/>
    <property type="evidence" value="ECO:0007669"/>
    <property type="project" value="TreeGrafter"/>
</dbReference>
<dbReference type="GO" id="GO:0009408">
    <property type="term" value="P:response to heat"/>
    <property type="evidence" value="ECO:0007669"/>
    <property type="project" value="TreeGrafter"/>
</dbReference>
<dbReference type="CDD" id="cd06526">
    <property type="entry name" value="metazoan_ACD"/>
    <property type="match status" value="1"/>
</dbReference>
<dbReference type="Gene3D" id="2.60.40.790">
    <property type="match status" value="1"/>
</dbReference>
<dbReference type="InterPro" id="IPR002068">
    <property type="entry name" value="A-crystallin/Hsp20_dom"/>
</dbReference>
<dbReference type="InterPro" id="IPR001436">
    <property type="entry name" value="Alpha-crystallin/sHSP_animal"/>
</dbReference>
<dbReference type="InterPro" id="IPR008978">
    <property type="entry name" value="HSP20-like_chaperone"/>
</dbReference>
<dbReference type="PANTHER" id="PTHR45640:SF13">
    <property type="entry name" value="HEAT SHOCK PROTEIN 22-RELATED"/>
    <property type="match status" value="1"/>
</dbReference>
<dbReference type="PANTHER" id="PTHR45640">
    <property type="entry name" value="HEAT SHOCK PROTEIN HSP-12.2-RELATED"/>
    <property type="match status" value="1"/>
</dbReference>
<dbReference type="Pfam" id="PF00011">
    <property type="entry name" value="HSP20"/>
    <property type="match status" value="1"/>
</dbReference>
<dbReference type="PRINTS" id="PR00299">
    <property type="entry name" value="ACRYSTALLIN"/>
</dbReference>
<dbReference type="SUPFAM" id="SSF49764">
    <property type="entry name" value="HSP20-like chaperones"/>
    <property type="match status" value="1"/>
</dbReference>
<dbReference type="PROSITE" id="PS01031">
    <property type="entry name" value="SHSP"/>
    <property type="match status" value="1"/>
</dbReference>
<evidence type="ECO:0000255" key="1">
    <source>
        <dbReference type="PROSITE-ProRule" id="PRU00285"/>
    </source>
</evidence>
<evidence type="ECO:0000256" key="2">
    <source>
        <dbReference type="SAM" id="MobiDB-lite"/>
    </source>
</evidence>
<organism>
    <name type="scientific">Onchocerca volvulus</name>
    <dbReference type="NCBI Taxonomy" id="6282"/>
    <lineage>
        <taxon>Eukaryota</taxon>
        <taxon>Metazoa</taxon>
        <taxon>Ecdysozoa</taxon>
        <taxon>Nematoda</taxon>
        <taxon>Chromadorea</taxon>
        <taxon>Rhabditida</taxon>
        <taxon>Spirurina</taxon>
        <taxon>Spiruromorpha</taxon>
        <taxon>Filarioidea</taxon>
        <taxon>Onchocercidae</taxon>
        <taxon>Onchocerca</taxon>
    </lineage>
</organism>